<keyword id="KW-0175">Coiled coil</keyword>
<keyword id="KW-1185">Reference proteome</keyword>
<protein>
    <recommendedName>
        <fullName>Uncharacterized protein YvzA</fullName>
    </recommendedName>
</protein>
<reference key="1">
    <citation type="journal article" date="1997" name="Nature">
        <title>The complete genome sequence of the Gram-positive bacterium Bacillus subtilis.</title>
        <authorList>
            <person name="Kunst F."/>
            <person name="Ogasawara N."/>
            <person name="Moszer I."/>
            <person name="Albertini A.M."/>
            <person name="Alloni G."/>
            <person name="Azevedo V."/>
            <person name="Bertero M.G."/>
            <person name="Bessieres P."/>
            <person name="Bolotin A."/>
            <person name="Borchert S."/>
            <person name="Borriss R."/>
            <person name="Boursier L."/>
            <person name="Brans A."/>
            <person name="Braun M."/>
            <person name="Brignell S.C."/>
            <person name="Bron S."/>
            <person name="Brouillet S."/>
            <person name="Bruschi C.V."/>
            <person name="Caldwell B."/>
            <person name="Capuano V."/>
            <person name="Carter N.M."/>
            <person name="Choi S.-K."/>
            <person name="Codani J.-J."/>
            <person name="Connerton I.F."/>
            <person name="Cummings N.J."/>
            <person name="Daniel R.A."/>
            <person name="Denizot F."/>
            <person name="Devine K.M."/>
            <person name="Duesterhoeft A."/>
            <person name="Ehrlich S.D."/>
            <person name="Emmerson P.T."/>
            <person name="Entian K.-D."/>
            <person name="Errington J."/>
            <person name="Fabret C."/>
            <person name="Ferrari E."/>
            <person name="Foulger D."/>
            <person name="Fritz C."/>
            <person name="Fujita M."/>
            <person name="Fujita Y."/>
            <person name="Fuma S."/>
            <person name="Galizzi A."/>
            <person name="Galleron N."/>
            <person name="Ghim S.-Y."/>
            <person name="Glaser P."/>
            <person name="Goffeau A."/>
            <person name="Golightly E.J."/>
            <person name="Grandi G."/>
            <person name="Guiseppi G."/>
            <person name="Guy B.J."/>
            <person name="Haga K."/>
            <person name="Haiech J."/>
            <person name="Harwood C.R."/>
            <person name="Henaut A."/>
            <person name="Hilbert H."/>
            <person name="Holsappel S."/>
            <person name="Hosono S."/>
            <person name="Hullo M.-F."/>
            <person name="Itaya M."/>
            <person name="Jones L.-M."/>
            <person name="Joris B."/>
            <person name="Karamata D."/>
            <person name="Kasahara Y."/>
            <person name="Klaerr-Blanchard M."/>
            <person name="Klein C."/>
            <person name="Kobayashi Y."/>
            <person name="Koetter P."/>
            <person name="Koningstein G."/>
            <person name="Krogh S."/>
            <person name="Kumano M."/>
            <person name="Kurita K."/>
            <person name="Lapidus A."/>
            <person name="Lardinois S."/>
            <person name="Lauber J."/>
            <person name="Lazarevic V."/>
            <person name="Lee S.-M."/>
            <person name="Levine A."/>
            <person name="Liu H."/>
            <person name="Masuda S."/>
            <person name="Mauel C."/>
            <person name="Medigue C."/>
            <person name="Medina N."/>
            <person name="Mellado R.P."/>
            <person name="Mizuno M."/>
            <person name="Moestl D."/>
            <person name="Nakai S."/>
            <person name="Noback M."/>
            <person name="Noone D."/>
            <person name="O'Reilly M."/>
            <person name="Ogawa K."/>
            <person name="Ogiwara A."/>
            <person name="Oudega B."/>
            <person name="Park S.-H."/>
            <person name="Parro V."/>
            <person name="Pohl T.M."/>
            <person name="Portetelle D."/>
            <person name="Porwollik S."/>
            <person name="Prescott A.M."/>
            <person name="Presecan E."/>
            <person name="Pujic P."/>
            <person name="Purnelle B."/>
            <person name="Rapoport G."/>
            <person name="Rey M."/>
            <person name="Reynolds S."/>
            <person name="Rieger M."/>
            <person name="Rivolta C."/>
            <person name="Rocha E."/>
            <person name="Roche B."/>
            <person name="Rose M."/>
            <person name="Sadaie Y."/>
            <person name="Sato T."/>
            <person name="Scanlan E."/>
            <person name="Schleich S."/>
            <person name="Schroeter R."/>
            <person name="Scoffone F."/>
            <person name="Sekiguchi J."/>
            <person name="Sekowska A."/>
            <person name="Seror S.J."/>
            <person name="Serror P."/>
            <person name="Shin B.-S."/>
            <person name="Soldo B."/>
            <person name="Sorokin A."/>
            <person name="Tacconi E."/>
            <person name="Takagi T."/>
            <person name="Takahashi H."/>
            <person name="Takemaru K."/>
            <person name="Takeuchi M."/>
            <person name="Tamakoshi A."/>
            <person name="Tanaka T."/>
            <person name="Terpstra P."/>
            <person name="Tognoni A."/>
            <person name="Tosato V."/>
            <person name="Uchiyama S."/>
            <person name="Vandenbol M."/>
            <person name="Vannier F."/>
            <person name="Vassarotti A."/>
            <person name="Viari A."/>
            <person name="Wambutt R."/>
            <person name="Wedler E."/>
            <person name="Wedler H."/>
            <person name="Weitzenegger T."/>
            <person name="Winters P."/>
            <person name="Wipat A."/>
            <person name="Yamamoto H."/>
            <person name="Yamane K."/>
            <person name="Yasumoto K."/>
            <person name="Yata K."/>
            <person name="Yoshida K."/>
            <person name="Yoshikawa H.-F."/>
            <person name="Zumstein E."/>
            <person name="Yoshikawa H."/>
            <person name="Danchin A."/>
        </authorList>
    </citation>
    <scope>NUCLEOTIDE SEQUENCE [LARGE SCALE GENOMIC DNA]</scope>
    <source>
        <strain>168</strain>
    </source>
</reference>
<organism>
    <name type="scientific">Bacillus subtilis (strain 168)</name>
    <dbReference type="NCBI Taxonomy" id="224308"/>
    <lineage>
        <taxon>Bacteria</taxon>
        <taxon>Bacillati</taxon>
        <taxon>Bacillota</taxon>
        <taxon>Bacilli</taxon>
        <taxon>Bacillales</taxon>
        <taxon>Bacillaceae</taxon>
        <taxon>Bacillus</taxon>
    </lineage>
</organism>
<feature type="chain" id="PRO_0000360749" description="Uncharacterized protein YvzA">
    <location>
        <begin position="1"/>
        <end position="119"/>
    </location>
</feature>
<feature type="coiled-coil region" evidence="1">
    <location>
        <begin position="63"/>
        <end position="104"/>
    </location>
</feature>
<dbReference type="EMBL" id="AL009126">
    <property type="protein sequence ID" value="CAB15488.1"/>
    <property type="molecule type" value="Genomic_DNA"/>
</dbReference>
<dbReference type="PIR" id="E70049">
    <property type="entry name" value="E70049"/>
</dbReference>
<dbReference type="RefSeq" id="NP_391363.1">
    <property type="nucleotide sequence ID" value="NC_000964.3"/>
</dbReference>
<dbReference type="RefSeq" id="WP_003228131.1">
    <property type="nucleotide sequence ID" value="NZ_OZ025638.1"/>
</dbReference>
<dbReference type="SMR" id="O32265"/>
<dbReference type="FunCoup" id="O32265">
    <property type="interactions" value="7"/>
</dbReference>
<dbReference type="STRING" id="224308.BSU34830"/>
<dbReference type="PaxDb" id="224308-BSU34830"/>
<dbReference type="EnsemblBacteria" id="CAB15488">
    <property type="protein sequence ID" value="CAB15488"/>
    <property type="gene ID" value="BSU_34830"/>
</dbReference>
<dbReference type="GeneID" id="936541"/>
<dbReference type="KEGG" id="bsu:BSU34830"/>
<dbReference type="PATRIC" id="fig|224308.179.peg.3771"/>
<dbReference type="InParanoid" id="O32265"/>
<dbReference type="OrthoDB" id="2916896at2"/>
<dbReference type="BioCyc" id="BSUB:BSU34830-MONOMER"/>
<dbReference type="Proteomes" id="UP000001570">
    <property type="component" value="Chromosome"/>
</dbReference>
<sequence length="119" mass="13804">MTSLFSESETEIVSTTYMFLTQDEMKGKAGTLNQPINDFLSLTKKFESSLKEEIKGQKGLIVKKIKKELESNSEKRKAALQMIKEEHTAKVDRYKMIIEDLRQQDVTLTYRKKKPVKDV</sequence>
<name>YVZA_BACSU</name>
<proteinExistence type="predicted"/>
<evidence type="ECO:0000255" key="1"/>
<accession>O32265</accession>
<gene>
    <name type="primary">yvzA</name>
    <name type="ordered locus">BSU34830</name>
</gene>